<evidence type="ECO:0000250" key="1"/>
<evidence type="ECO:0000255" key="2">
    <source>
        <dbReference type="PROSITE-ProRule" id="PRU00366"/>
    </source>
</evidence>
<evidence type="ECO:0000256" key="3">
    <source>
        <dbReference type="SAM" id="MobiDB-lite"/>
    </source>
</evidence>
<evidence type="ECO:0000269" key="4">
    <source>
    </source>
</evidence>
<evidence type="ECO:0000269" key="5">
    <source>
    </source>
</evidence>
<evidence type="ECO:0000303" key="6">
    <source>
    </source>
</evidence>
<evidence type="ECO:0000305" key="7"/>
<organism>
    <name type="scientific">Arabidopsis thaliana</name>
    <name type="common">Mouse-ear cress</name>
    <dbReference type="NCBI Taxonomy" id="3702"/>
    <lineage>
        <taxon>Eukaryota</taxon>
        <taxon>Viridiplantae</taxon>
        <taxon>Streptophyta</taxon>
        <taxon>Embryophyta</taxon>
        <taxon>Tracheophyta</taxon>
        <taxon>Spermatophyta</taxon>
        <taxon>Magnoliopsida</taxon>
        <taxon>eudicotyledons</taxon>
        <taxon>Gunneridae</taxon>
        <taxon>Pentapetalae</taxon>
        <taxon>rosids</taxon>
        <taxon>malvids</taxon>
        <taxon>Brassicales</taxon>
        <taxon>Brassicaceae</taxon>
        <taxon>Camelineae</taxon>
        <taxon>Arabidopsis</taxon>
    </lineage>
</organism>
<proteinExistence type="evidence at transcript level"/>
<accession>Q9SFE4</accession>
<accession>Q8LDL8</accession>
<comment type="function">
    <text evidence="1 4 5">Transcriptional activator involved in the regulation of plant development and tolerance to abiotic stresses (PubMed:21069430). Involved in salt and osmotic stress response pathways. May be regulated by the stress-related genes RD29A, RD22, DREB1A or P5CS during stress response (PubMed:27137403). Binds to the GCC-box pathogenesis-related promoter element. May be involved in the regulation of gene expression by stress factors and by components of stress signal transduction pathways (By similarity).</text>
</comment>
<comment type="subcellular location">
    <subcellularLocation>
        <location evidence="2 4">Nucleus</location>
    </subcellularLocation>
</comment>
<comment type="tissue specificity">
    <text evidence="4">Expressed cotyledons, ovules and seeds of immature siliques.</text>
</comment>
<comment type="induction">
    <text evidence="4">Induced by jasmonate (JA) and ethylene. Down-regulated by freezing and heat stresses.</text>
</comment>
<comment type="similarity">
    <text evidence="7">Belongs to the AP2/ERF transcription factor family. ERF subfamily.</text>
</comment>
<protein>
    <recommendedName>
        <fullName>Ethylene-responsive transcription factor ERF012</fullName>
    </recommendedName>
    <alternativeName>
        <fullName evidence="6">Dehydration response element-binding protein 26</fullName>
    </alternativeName>
</protein>
<keyword id="KW-0010">Activator</keyword>
<keyword id="KW-0238">DNA-binding</keyword>
<keyword id="KW-0936">Ethylene signaling pathway</keyword>
<keyword id="KW-0539">Nucleus</keyword>
<keyword id="KW-1185">Reference proteome</keyword>
<keyword id="KW-0346">Stress response</keyword>
<keyword id="KW-0804">Transcription</keyword>
<keyword id="KW-0805">Transcription regulation</keyword>
<reference key="1">
    <citation type="journal article" date="2000" name="Nature">
        <title>Sequence and analysis of chromosome 1 of the plant Arabidopsis thaliana.</title>
        <authorList>
            <person name="Theologis A."/>
            <person name="Ecker J.R."/>
            <person name="Palm C.J."/>
            <person name="Federspiel N.A."/>
            <person name="Kaul S."/>
            <person name="White O."/>
            <person name="Alonso J."/>
            <person name="Altafi H."/>
            <person name="Araujo R."/>
            <person name="Bowman C.L."/>
            <person name="Brooks S.Y."/>
            <person name="Buehler E."/>
            <person name="Chan A."/>
            <person name="Chao Q."/>
            <person name="Chen H."/>
            <person name="Cheuk R.F."/>
            <person name="Chin C.W."/>
            <person name="Chung M.K."/>
            <person name="Conn L."/>
            <person name="Conway A.B."/>
            <person name="Conway A.R."/>
            <person name="Creasy T.H."/>
            <person name="Dewar K."/>
            <person name="Dunn P."/>
            <person name="Etgu P."/>
            <person name="Feldblyum T.V."/>
            <person name="Feng J.-D."/>
            <person name="Fong B."/>
            <person name="Fujii C.Y."/>
            <person name="Gill J.E."/>
            <person name="Goldsmith A.D."/>
            <person name="Haas B."/>
            <person name="Hansen N.F."/>
            <person name="Hughes B."/>
            <person name="Huizar L."/>
            <person name="Hunter J.L."/>
            <person name="Jenkins J."/>
            <person name="Johnson-Hopson C."/>
            <person name="Khan S."/>
            <person name="Khaykin E."/>
            <person name="Kim C.J."/>
            <person name="Koo H.L."/>
            <person name="Kremenetskaia I."/>
            <person name="Kurtz D.B."/>
            <person name="Kwan A."/>
            <person name="Lam B."/>
            <person name="Langin-Hooper S."/>
            <person name="Lee A."/>
            <person name="Lee J.M."/>
            <person name="Lenz C.A."/>
            <person name="Li J.H."/>
            <person name="Li Y.-P."/>
            <person name="Lin X."/>
            <person name="Liu S.X."/>
            <person name="Liu Z.A."/>
            <person name="Luros J.S."/>
            <person name="Maiti R."/>
            <person name="Marziali A."/>
            <person name="Militscher J."/>
            <person name="Miranda M."/>
            <person name="Nguyen M."/>
            <person name="Nierman W.C."/>
            <person name="Osborne B.I."/>
            <person name="Pai G."/>
            <person name="Peterson J."/>
            <person name="Pham P.K."/>
            <person name="Rizzo M."/>
            <person name="Rooney T."/>
            <person name="Rowley D."/>
            <person name="Sakano H."/>
            <person name="Salzberg S.L."/>
            <person name="Schwartz J.R."/>
            <person name="Shinn P."/>
            <person name="Southwick A.M."/>
            <person name="Sun H."/>
            <person name="Tallon L.J."/>
            <person name="Tambunga G."/>
            <person name="Toriumi M.J."/>
            <person name="Town C.D."/>
            <person name="Utterback T."/>
            <person name="Van Aken S."/>
            <person name="Vaysberg M."/>
            <person name="Vysotskaia V.S."/>
            <person name="Walker M."/>
            <person name="Wu D."/>
            <person name="Yu G."/>
            <person name="Fraser C.M."/>
            <person name="Venter J.C."/>
            <person name="Davis R.W."/>
        </authorList>
    </citation>
    <scope>NUCLEOTIDE SEQUENCE [LARGE SCALE GENOMIC DNA]</scope>
    <source>
        <strain>cv. Columbia</strain>
    </source>
</reference>
<reference key="2">
    <citation type="journal article" date="2017" name="Plant J.">
        <title>Araport11: a complete reannotation of the Arabidopsis thaliana reference genome.</title>
        <authorList>
            <person name="Cheng C.Y."/>
            <person name="Krishnakumar V."/>
            <person name="Chan A.P."/>
            <person name="Thibaud-Nissen F."/>
            <person name="Schobel S."/>
            <person name="Town C.D."/>
        </authorList>
    </citation>
    <scope>GENOME REANNOTATION</scope>
    <source>
        <strain>cv. Columbia</strain>
    </source>
</reference>
<reference key="3">
    <citation type="submission" date="2004-09" db="EMBL/GenBank/DDBJ databases">
        <title>Large-scale analysis of RIKEN Arabidopsis full-length (RAFL) cDNAs.</title>
        <authorList>
            <person name="Totoki Y."/>
            <person name="Seki M."/>
            <person name="Ishida J."/>
            <person name="Nakajima M."/>
            <person name="Enju A."/>
            <person name="Kamiya A."/>
            <person name="Narusaka M."/>
            <person name="Shin-i T."/>
            <person name="Nakagawa M."/>
            <person name="Sakamoto N."/>
            <person name="Oishi K."/>
            <person name="Kohara Y."/>
            <person name="Kobayashi M."/>
            <person name="Toyoda A."/>
            <person name="Sakaki Y."/>
            <person name="Sakurai T."/>
            <person name="Iida K."/>
            <person name="Akiyama K."/>
            <person name="Satou M."/>
            <person name="Toyoda T."/>
            <person name="Konagaya A."/>
            <person name="Carninci P."/>
            <person name="Kawai J."/>
            <person name="Hayashizaki Y."/>
            <person name="Shinozaki K."/>
        </authorList>
    </citation>
    <scope>NUCLEOTIDE SEQUENCE [LARGE SCALE MRNA]</scope>
    <source>
        <strain>cv. Columbia</strain>
    </source>
</reference>
<reference key="4">
    <citation type="submission" date="2006-02" db="EMBL/GenBank/DDBJ databases">
        <title>Arabidopsis ORF clones.</title>
        <authorList>
            <person name="Shinn P."/>
            <person name="Chen H."/>
            <person name="Kim C.J."/>
            <person name="Ecker J.R."/>
        </authorList>
    </citation>
    <scope>NUCLEOTIDE SEQUENCE [LARGE SCALE MRNA]</scope>
    <source>
        <strain>cv. Columbia</strain>
    </source>
</reference>
<reference key="5">
    <citation type="submission" date="2002-03" db="EMBL/GenBank/DDBJ databases">
        <title>Full-length cDNA from Arabidopsis thaliana.</title>
        <authorList>
            <person name="Brover V.V."/>
            <person name="Troukhan M.E."/>
            <person name="Alexandrov N.A."/>
            <person name="Lu Y.-P."/>
            <person name="Flavell R.B."/>
            <person name="Feldmann K.A."/>
        </authorList>
    </citation>
    <scope>NUCLEOTIDE SEQUENCE [LARGE SCALE MRNA]</scope>
</reference>
<reference key="6">
    <citation type="journal article" date="2006" name="Plant Physiol.">
        <title>Genome-wide analysis of the ERF gene family in Arabidopsis and rice.</title>
        <authorList>
            <person name="Nakano T."/>
            <person name="Suzuki K."/>
            <person name="Fujimura T."/>
            <person name="Shinshi H."/>
        </authorList>
    </citation>
    <scope>GENE FAMILY</scope>
    <scope>NOMENCLATURE</scope>
</reference>
<reference key="7">
    <citation type="journal article" date="2011" name="Plant Mol. Biol.">
        <title>Functional characterization of four APETALA2-family genes (RAP2.6, RAP2.6L, DREB19 and DREB26) in Arabidopsis.</title>
        <authorList>
            <person name="Krishnaswamy S."/>
            <person name="Verma S."/>
            <person name="Rahman M.H."/>
            <person name="Kav N.N."/>
        </authorList>
    </citation>
    <scope>FUNCTION</scope>
    <scope>SUBCELLULAR LOCATION</scope>
    <scope>TISSUE SPECIFICITY</scope>
    <scope>INDUCTION</scope>
</reference>
<reference key="8">
    <citation type="journal article" date="2013" name="Plants (Basel)">
        <title>Identification of chimeric repressors that confer salt and osmotic stress tolerance in Arabidopsis.</title>
        <authorList>
            <person name="Kazama D."/>
            <person name="Itakura M."/>
            <person name="Kurusu T."/>
            <person name="Mitsuda N."/>
            <person name="Ohme-Takagi M."/>
            <person name="Tada Y."/>
        </authorList>
    </citation>
    <scope>FUNCTION</scope>
</reference>
<sequence>MVKQERKIQTSSTKKEMPLSSSPSSSSSSSSSSSSSSCKNKNKKSKIKKYKGVRMRSWGSWVSEIRAPNQKTRIWLGSYSTAEAAARAYDVALLCLKGPQANLNFPTSSSSHHLLDNLLDENTLLSPKSIQRVAAQAANSFNHFAPTSSAVSSPSDHDHHHDDGMQSLMGSFVDNHVSLMDSTSSWYDDHNGMFLFDNGAPFNYSPQLNSTTMLDEYFYEDADIPLWSFN</sequence>
<gene>
    <name type="primary">ERF012</name>
    <name evidence="6" type="synonym">DREB26</name>
    <name type="ordered locus">At1g21910</name>
    <name type="ORF">T26F17.14</name>
</gene>
<dbReference type="EMBL" id="AC013482">
    <property type="protein sequence ID" value="AAF16532.1"/>
    <property type="molecule type" value="Genomic_DNA"/>
</dbReference>
<dbReference type="EMBL" id="CP002684">
    <property type="protein sequence ID" value="AEE30171.1"/>
    <property type="molecule type" value="Genomic_DNA"/>
</dbReference>
<dbReference type="EMBL" id="AK176679">
    <property type="protein sequence ID" value="BAD44442.1"/>
    <property type="molecule type" value="mRNA"/>
</dbReference>
<dbReference type="EMBL" id="BT024616">
    <property type="protein sequence ID" value="ABD43014.1"/>
    <property type="molecule type" value="mRNA"/>
</dbReference>
<dbReference type="EMBL" id="AY085925">
    <property type="protein sequence ID" value="AAM63137.1"/>
    <property type="molecule type" value="mRNA"/>
</dbReference>
<dbReference type="PIR" id="D86352">
    <property type="entry name" value="D86352"/>
</dbReference>
<dbReference type="RefSeq" id="NP_173609.1">
    <property type="nucleotide sequence ID" value="NM_102039.3"/>
</dbReference>
<dbReference type="SMR" id="Q9SFE4"/>
<dbReference type="BioGRID" id="24032">
    <property type="interactions" value="3"/>
</dbReference>
<dbReference type="FunCoup" id="Q9SFE4">
    <property type="interactions" value="27"/>
</dbReference>
<dbReference type="IntAct" id="Q9SFE4">
    <property type="interactions" value="3"/>
</dbReference>
<dbReference type="STRING" id="3702.Q9SFE4"/>
<dbReference type="PaxDb" id="3702-AT1G21910.1"/>
<dbReference type="EnsemblPlants" id="AT1G21910.1">
    <property type="protein sequence ID" value="AT1G21910.1"/>
    <property type="gene ID" value="AT1G21910"/>
</dbReference>
<dbReference type="GeneID" id="838793"/>
<dbReference type="Gramene" id="AT1G21910.1">
    <property type="protein sequence ID" value="AT1G21910.1"/>
    <property type="gene ID" value="AT1G21910"/>
</dbReference>
<dbReference type="KEGG" id="ath:AT1G21910"/>
<dbReference type="Araport" id="AT1G21910"/>
<dbReference type="TAIR" id="AT1G21910">
    <property type="gene designation" value="DREB26"/>
</dbReference>
<dbReference type="eggNOG" id="ENOG502RMWY">
    <property type="taxonomic scope" value="Eukaryota"/>
</dbReference>
<dbReference type="HOGENOM" id="CLU_063331_2_0_1"/>
<dbReference type="InParanoid" id="Q9SFE4"/>
<dbReference type="OMA" id="SSWYDDH"/>
<dbReference type="OrthoDB" id="665906at2759"/>
<dbReference type="PhylomeDB" id="Q9SFE4"/>
<dbReference type="PRO" id="PR:Q9SFE4"/>
<dbReference type="Proteomes" id="UP000006548">
    <property type="component" value="Chromosome 1"/>
</dbReference>
<dbReference type="ExpressionAtlas" id="Q9SFE4">
    <property type="expression patterns" value="baseline and differential"/>
</dbReference>
<dbReference type="GO" id="GO:0005634">
    <property type="term" value="C:nucleus"/>
    <property type="evidence" value="ECO:0000314"/>
    <property type="project" value="TAIR"/>
</dbReference>
<dbReference type="GO" id="GO:0003700">
    <property type="term" value="F:DNA-binding transcription factor activity"/>
    <property type="evidence" value="ECO:0000250"/>
    <property type="project" value="TAIR"/>
</dbReference>
<dbReference type="GO" id="GO:0000976">
    <property type="term" value="F:transcription cis-regulatory region binding"/>
    <property type="evidence" value="ECO:0000353"/>
    <property type="project" value="TAIR"/>
</dbReference>
<dbReference type="GO" id="GO:0071497">
    <property type="term" value="P:cellular response to freezing"/>
    <property type="evidence" value="ECO:0000270"/>
    <property type="project" value="TAIR"/>
</dbReference>
<dbReference type="GO" id="GO:0034605">
    <property type="term" value="P:cellular response to heat"/>
    <property type="evidence" value="ECO:0000270"/>
    <property type="project" value="TAIR"/>
</dbReference>
<dbReference type="GO" id="GO:0009873">
    <property type="term" value="P:ethylene-activated signaling pathway"/>
    <property type="evidence" value="ECO:0007669"/>
    <property type="project" value="UniProtKB-KW"/>
</dbReference>
<dbReference type="GO" id="GO:0045893">
    <property type="term" value="P:positive regulation of DNA-templated transcription"/>
    <property type="evidence" value="ECO:0000314"/>
    <property type="project" value="TAIR"/>
</dbReference>
<dbReference type="GO" id="GO:0009753">
    <property type="term" value="P:response to jasmonic acid"/>
    <property type="evidence" value="ECO:0000270"/>
    <property type="project" value="TAIR"/>
</dbReference>
<dbReference type="GO" id="GO:0009751">
    <property type="term" value="P:response to salicylic acid"/>
    <property type="evidence" value="ECO:0000270"/>
    <property type="project" value="TAIR"/>
</dbReference>
<dbReference type="CDD" id="cd00018">
    <property type="entry name" value="AP2"/>
    <property type="match status" value="1"/>
</dbReference>
<dbReference type="FunFam" id="3.30.730.10:FF:000006">
    <property type="entry name" value="ethylene-responsive transcription factor ERF014-like"/>
    <property type="match status" value="1"/>
</dbReference>
<dbReference type="Gene3D" id="3.30.730.10">
    <property type="entry name" value="AP2/ERF domain"/>
    <property type="match status" value="1"/>
</dbReference>
<dbReference type="InterPro" id="IPR001471">
    <property type="entry name" value="AP2/ERF_dom"/>
</dbReference>
<dbReference type="InterPro" id="IPR036955">
    <property type="entry name" value="AP2/ERF_dom_sf"/>
</dbReference>
<dbReference type="InterPro" id="IPR051032">
    <property type="entry name" value="AP2/ERF_TF_ERF_subfamily"/>
</dbReference>
<dbReference type="InterPro" id="IPR016177">
    <property type="entry name" value="DNA-bd_dom_sf"/>
</dbReference>
<dbReference type="PANTHER" id="PTHR31985:SF204">
    <property type="entry name" value="ETHYLENE-RESPONSIVE TRANSCRIPTION FACTOR ERF012"/>
    <property type="match status" value="1"/>
</dbReference>
<dbReference type="PANTHER" id="PTHR31985">
    <property type="entry name" value="ETHYLENE-RESPONSIVE TRANSCRIPTION FACTOR ERF042-RELATED"/>
    <property type="match status" value="1"/>
</dbReference>
<dbReference type="Pfam" id="PF00847">
    <property type="entry name" value="AP2"/>
    <property type="match status" value="1"/>
</dbReference>
<dbReference type="PRINTS" id="PR00367">
    <property type="entry name" value="ETHRSPELEMNT"/>
</dbReference>
<dbReference type="SMART" id="SM00380">
    <property type="entry name" value="AP2"/>
    <property type="match status" value="1"/>
</dbReference>
<dbReference type="SUPFAM" id="SSF54171">
    <property type="entry name" value="DNA-binding domain"/>
    <property type="match status" value="1"/>
</dbReference>
<dbReference type="PROSITE" id="PS51032">
    <property type="entry name" value="AP2_ERF"/>
    <property type="match status" value="1"/>
</dbReference>
<feature type="chain" id="PRO_0000290374" description="Ethylene-responsive transcription factor ERF012">
    <location>
        <begin position="1"/>
        <end position="230"/>
    </location>
</feature>
<feature type="DNA-binding region" description="AP2/ERF" evidence="2">
    <location>
        <begin position="49"/>
        <end position="106"/>
    </location>
</feature>
<feature type="region of interest" description="Disordered" evidence="3">
    <location>
        <begin position="1"/>
        <end position="51"/>
    </location>
</feature>
<feature type="compositionally biased region" description="Basic and acidic residues" evidence="3">
    <location>
        <begin position="1"/>
        <end position="17"/>
    </location>
</feature>
<feature type="compositionally biased region" description="Low complexity" evidence="3">
    <location>
        <begin position="20"/>
        <end position="39"/>
    </location>
</feature>
<feature type="compositionally biased region" description="Basic residues" evidence="3">
    <location>
        <begin position="40"/>
        <end position="51"/>
    </location>
</feature>
<feature type="sequence conflict" description="In Ref. 5; AAM63137." evidence="7" ref="5">
    <original>S</original>
    <variation>SS</variation>
    <location>
        <position position="37"/>
    </location>
</feature>
<name>ERF12_ARATH</name>